<keyword id="KW-0175">Coiled coil</keyword>
<keyword id="KW-1185">Reference proteome</keyword>
<sequence>MWPQPHLPTHPHLPTHPHLPTHPHLPTHPHLPTHPMMSKETRQSKLAEAKEQLTDHHPQTNPSVGTAASDTKKKKINNGTNPETTTSGGCHSPEDEQKASHQHQEALRRELEAQVQTIRILTCQKTELQMALYYSQHAVKQLEGEARDLISRLHDSWKFAGELEQALSAVATQKKKADRYIEELTKERDALSLELYRNTITDEELKEKNAKLQEKLQLVESEKSEIQLNVKELKRKLERAKLLLPQQQLQAEADHLGKELQSVSAKLQAQVEENELWNRLNQQQEEKMWRQEEKIQEREEKIQEQEEKIREQEEKMRRQEEMMWEKEEKMRRQEEMMWEKEEKIRELEEKMHEQEKIREQEEKRQEEEKIREQEKRQEQEAKMWRQEEKIREQEEKIREQEKKMWRQEEKIHEQEKIREEEKRQEQEEMWRQEEKIREQEEIWRQKEKMHEQEEKIRKQEEKVWRQEEKMHDQEEKIREQEEKVWRQEEKIREQEEKMWRQEEKIREQEEMWREEEKMHEQEKIWEEEKRQEQEDKMWRQEEKIREQEEKVWRQEEKIREQEEKRQEQEEKMWKQEEKIREQEEKTREQEKIREQEEKIREQEEMMQEQEEKMGEQEEKMQEQEKMRRQEEKIREQEEKIREQKEKIREQEEKIWEQEEKIREQEEMMQEQEEKMGEQEEKMWEQEEEMQEQEEKMRRQEEKIREQEKKIREQEEKIREQEEMMQEQEEKMGEQEGKMCEQEAKMQEQEEKMRRQEEKIREQEKKIREQEEKIREQEEMMQEQEEKMWEQEEKMCEQEEKMQEQEEKMRRQEEKMREQEVRLRQQEEKMQEH</sequence>
<proteinExistence type="inferred from homology"/>
<feature type="chain" id="PRO_0000457098" description="Golgin subfamily A member 6-like protein 24">
    <location>
        <begin position="1"/>
        <end position="832"/>
    </location>
</feature>
<feature type="region of interest" description="Disordered" evidence="2">
    <location>
        <begin position="1"/>
        <end position="107"/>
    </location>
</feature>
<feature type="region of interest" description="Disordered" evidence="2">
    <location>
        <begin position="303"/>
        <end position="333"/>
    </location>
</feature>
<feature type="region of interest" description="Disordered" evidence="2">
    <location>
        <begin position="351"/>
        <end position="431"/>
    </location>
</feature>
<feature type="region of interest" description="Disordered" evidence="2">
    <location>
        <begin position="508"/>
        <end position="652"/>
    </location>
</feature>
<feature type="region of interest" description="Disordered" evidence="2">
    <location>
        <begin position="664"/>
        <end position="832"/>
    </location>
</feature>
<feature type="coiled-coil region" evidence="1">
    <location>
        <begin position="163"/>
        <end position="828"/>
    </location>
</feature>
<feature type="compositionally biased region" description="Basic residues" evidence="2">
    <location>
        <begin position="13"/>
        <end position="27"/>
    </location>
</feature>
<feature type="compositionally biased region" description="Basic and acidic residues" evidence="2">
    <location>
        <begin position="37"/>
        <end position="58"/>
    </location>
</feature>
<feature type="compositionally biased region" description="Polar residues" evidence="2">
    <location>
        <begin position="59"/>
        <end position="69"/>
    </location>
</feature>
<feature type="compositionally biased region" description="Polar residues" evidence="2">
    <location>
        <begin position="77"/>
        <end position="89"/>
    </location>
</feature>
<feature type="compositionally biased region" description="Basic and acidic residues" evidence="2">
    <location>
        <begin position="92"/>
        <end position="107"/>
    </location>
</feature>
<feature type="compositionally biased region" description="Basic and acidic residues" evidence="2">
    <location>
        <begin position="664"/>
        <end position="684"/>
    </location>
</feature>
<feature type="compositionally biased region" description="Basic and acidic residues" evidence="2">
    <location>
        <begin position="692"/>
        <end position="832"/>
    </location>
</feature>
<comment type="similarity">
    <text evidence="3">Belongs to the GOLGA6 family.</text>
</comment>
<accession>P0DX00</accession>
<protein>
    <recommendedName>
        <fullName evidence="3">Golgin subfamily A member 6-like protein 24</fullName>
    </recommendedName>
</protein>
<evidence type="ECO:0000255" key="1"/>
<evidence type="ECO:0000256" key="2">
    <source>
        <dbReference type="SAM" id="MobiDB-lite"/>
    </source>
</evidence>
<evidence type="ECO:0000305" key="3"/>
<evidence type="ECO:0000312" key="4">
    <source>
        <dbReference type="HGNC" id="HGNC:55710"/>
    </source>
</evidence>
<gene>
    <name evidence="4" type="primary">GOLGA6L24</name>
</gene>
<organism>
    <name type="scientific">Homo sapiens</name>
    <name type="common">Human</name>
    <dbReference type="NCBI Taxonomy" id="9606"/>
    <lineage>
        <taxon>Eukaryota</taxon>
        <taxon>Metazoa</taxon>
        <taxon>Chordata</taxon>
        <taxon>Craniata</taxon>
        <taxon>Vertebrata</taxon>
        <taxon>Euteleostomi</taxon>
        <taxon>Mammalia</taxon>
        <taxon>Eutheria</taxon>
        <taxon>Euarchontoglires</taxon>
        <taxon>Primates</taxon>
        <taxon>Haplorrhini</taxon>
        <taxon>Catarrhini</taxon>
        <taxon>Hominidae</taxon>
        <taxon>Homo</taxon>
    </lineage>
</organism>
<reference key="1">
    <citation type="journal article" date="2006" name="Nature">
        <title>Analysis of the DNA sequence and duplication history of human chromosome 15.</title>
        <authorList>
            <person name="Zody M.C."/>
            <person name="Garber M."/>
            <person name="Sharpe T."/>
            <person name="Young S.K."/>
            <person name="Rowen L."/>
            <person name="O'Neill K."/>
            <person name="Whittaker C.A."/>
            <person name="Kamal M."/>
            <person name="Chang J.L."/>
            <person name="Cuomo C.A."/>
            <person name="Dewar K."/>
            <person name="FitzGerald M.G."/>
            <person name="Kodira C.D."/>
            <person name="Madan A."/>
            <person name="Qin S."/>
            <person name="Yang X."/>
            <person name="Abbasi N."/>
            <person name="Abouelleil A."/>
            <person name="Arachchi H.M."/>
            <person name="Baradarani L."/>
            <person name="Birditt B."/>
            <person name="Bloom S."/>
            <person name="Bloom T."/>
            <person name="Borowsky M.L."/>
            <person name="Burke J."/>
            <person name="Butler J."/>
            <person name="Cook A."/>
            <person name="DeArellano K."/>
            <person name="DeCaprio D."/>
            <person name="Dorris L. III"/>
            <person name="Dors M."/>
            <person name="Eichler E.E."/>
            <person name="Engels R."/>
            <person name="Fahey J."/>
            <person name="Fleetwood P."/>
            <person name="Friedman C."/>
            <person name="Gearin G."/>
            <person name="Hall J.L."/>
            <person name="Hensley G."/>
            <person name="Johnson E."/>
            <person name="Jones C."/>
            <person name="Kamat A."/>
            <person name="Kaur A."/>
            <person name="Locke D.P."/>
            <person name="Madan A."/>
            <person name="Munson G."/>
            <person name="Jaffe D.B."/>
            <person name="Lui A."/>
            <person name="Macdonald P."/>
            <person name="Mauceli E."/>
            <person name="Naylor J.W."/>
            <person name="Nesbitt R."/>
            <person name="Nicol R."/>
            <person name="O'Leary S.B."/>
            <person name="Ratcliffe A."/>
            <person name="Rounsley S."/>
            <person name="She X."/>
            <person name="Sneddon K.M.B."/>
            <person name="Stewart S."/>
            <person name="Sougnez C."/>
            <person name="Stone S.M."/>
            <person name="Topham K."/>
            <person name="Vincent D."/>
            <person name="Wang S."/>
            <person name="Zimmer A.R."/>
            <person name="Birren B.W."/>
            <person name="Hood L."/>
            <person name="Lander E.S."/>
            <person name="Nusbaum C."/>
        </authorList>
    </citation>
    <scope>NUCLEOTIDE SEQUENCE [LARGE SCALE GENOMIC DNA]</scope>
</reference>
<dbReference type="EMBL" id="AC091304">
    <property type="status" value="NOT_ANNOTATED_CDS"/>
    <property type="molecule type" value="Genomic_DNA"/>
</dbReference>
<dbReference type="CCDS" id="CCDS91967.1"/>
<dbReference type="RefSeq" id="NP_001381687.1">
    <property type="nucleotide sequence ID" value="NM_001394758.1"/>
</dbReference>
<dbReference type="SMR" id="P0DX00"/>
<dbReference type="PeptideAtlas" id="P0DX00"/>
<dbReference type="Ensembl" id="ENST00000568624.2">
    <property type="protein sequence ID" value="ENSP00000509898.1"/>
    <property type="gene ID" value="ENSG00000237850.8"/>
</dbReference>
<dbReference type="GeneID" id="645202"/>
<dbReference type="MANE-Select" id="ENST00000568624.2">
    <property type="protein sequence ID" value="ENSP00000509898.1"/>
    <property type="RefSeq nucleotide sequence ID" value="NM_001394758.1"/>
    <property type="RefSeq protein sequence ID" value="NP_001381687.1"/>
</dbReference>
<dbReference type="AGR" id="HGNC:55710"/>
<dbReference type="GeneCards" id="GOLGA6L24"/>
<dbReference type="HGNC" id="HGNC:55710">
    <property type="gene designation" value="GOLGA6L24"/>
</dbReference>
<dbReference type="GeneTree" id="ENSGT00940000163338"/>
<dbReference type="PRO" id="PR:P0DX00"/>
<dbReference type="Proteomes" id="UP000005640">
    <property type="component" value="Chromosome 15"/>
</dbReference>
<dbReference type="InterPro" id="IPR026737">
    <property type="entry name" value="GOLGA6L"/>
</dbReference>
<dbReference type="PANTHER" id="PTHR23143:SF31">
    <property type="entry name" value="GOLGIN SUBFAMILY A MEMBER 6-LIKE PROTEIN 1-RELATED"/>
    <property type="match status" value="1"/>
</dbReference>
<dbReference type="PANTHER" id="PTHR23143">
    <property type="entry name" value="TRICHOHYALIN-RELATED"/>
    <property type="match status" value="1"/>
</dbReference>
<name>GG6LX_HUMAN</name>